<organism>
    <name type="scientific">Dictyostelium discoideum</name>
    <name type="common">Social amoeba</name>
    <dbReference type="NCBI Taxonomy" id="44689"/>
    <lineage>
        <taxon>Eukaryota</taxon>
        <taxon>Amoebozoa</taxon>
        <taxon>Evosea</taxon>
        <taxon>Eumycetozoa</taxon>
        <taxon>Dictyostelia</taxon>
        <taxon>Dictyosteliales</taxon>
        <taxon>Dictyosteliaceae</taxon>
        <taxon>Dictyostelium</taxon>
    </lineage>
</organism>
<accession>Q54MJ9</accession>
<keyword id="KW-0472">Membrane</keyword>
<keyword id="KW-1185">Reference proteome</keyword>
<keyword id="KW-0812">Transmembrane</keyword>
<keyword id="KW-1133">Transmembrane helix</keyword>
<proteinExistence type="inferred from homology"/>
<evidence type="ECO:0000250" key="1">
    <source>
        <dbReference type="UniProtKB" id="P43585"/>
    </source>
</evidence>
<evidence type="ECO:0000250" key="2">
    <source>
        <dbReference type="UniProtKB" id="Q9UBH6"/>
    </source>
</evidence>
<evidence type="ECO:0000250" key="3">
    <source>
        <dbReference type="UniProtKB" id="Q9Z0U0"/>
    </source>
</evidence>
<evidence type="ECO:0000255" key="4"/>
<evidence type="ECO:0000255" key="5">
    <source>
        <dbReference type="PROSITE-ProRule" id="PRU00712"/>
    </source>
</evidence>
<evidence type="ECO:0000255" key="6">
    <source>
        <dbReference type="PROSITE-ProRule" id="PRU00714"/>
    </source>
</evidence>
<evidence type="ECO:0000256" key="7">
    <source>
        <dbReference type="SAM" id="MobiDB-lite"/>
    </source>
</evidence>
<evidence type="ECO:0000305" key="8"/>
<feature type="chain" id="PRO_0000330822" description="SPX and EXS domain-containing protein 3">
    <location>
        <begin position="1"/>
        <end position="919"/>
    </location>
</feature>
<feature type="transmembrane region" description="Helical" evidence="4">
    <location>
        <begin position="401"/>
        <end position="421"/>
    </location>
</feature>
<feature type="transmembrane region" description="Helical" evidence="4">
    <location>
        <begin position="450"/>
        <end position="470"/>
    </location>
</feature>
<feature type="transmembrane region" description="Helical" evidence="4">
    <location>
        <begin position="492"/>
        <end position="512"/>
    </location>
</feature>
<feature type="transmembrane region" description="Helical" evidence="4">
    <location>
        <begin position="521"/>
        <end position="541"/>
    </location>
</feature>
<feature type="transmembrane region" description="Helical" evidence="4">
    <location>
        <begin position="676"/>
        <end position="696"/>
    </location>
</feature>
<feature type="domain" description="SPX" evidence="6">
    <location>
        <begin position="1"/>
        <end position="350"/>
    </location>
</feature>
<feature type="domain" description="EXS" evidence="5">
    <location>
        <begin position="605"/>
        <end position="806"/>
    </location>
</feature>
<feature type="region of interest" description="Disordered" evidence="7">
    <location>
        <begin position="62"/>
        <end position="137"/>
    </location>
</feature>
<feature type="region of interest" description="Disordered" evidence="7">
    <location>
        <begin position="242"/>
        <end position="272"/>
    </location>
</feature>
<feature type="region of interest" description="Important for inositol polyphosphate binding" evidence="1">
    <location>
        <begin position="331"/>
        <end position="338"/>
    </location>
</feature>
<feature type="region of interest" description="Disordered" evidence="7">
    <location>
        <begin position="891"/>
        <end position="919"/>
    </location>
</feature>
<feature type="compositionally biased region" description="Low complexity" evidence="7">
    <location>
        <begin position="70"/>
        <end position="132"/>
    </location>
</feature>
<feature type="compositionally biased region" description="Low complexity" evidence="7">
    <location>
        <begin position="252"/>
        <end position="272"/>
    </location>
</feature>
<feature type="compositionally biased region" description="Polar residues" evidence="7">
    <location>
        <begin position="898"/>
        <end position="910"/>
    </location>
</feature>
<feature type="site" description="Important for inositol polyphosphate binding" evidence="1">
    <location>
        <position position="22"/>
    </location>
</feature>
<feature type="site" description="Important for inositol polyphosphate binding" evidence="1">
    <location>
        <position position="26"/>
    </location>
</feature>
<gene>
    <name type="primary">xpr1</name>
    <name type="ORF">DDB_G0285957</name>
</gene>
<sequence length="919" mass="105312">MKFGKYLQRRQVSAWKKKYVFYKSFKKQIKSIKRAKTEEELYIGNESQIQIELTAIPINKSISKIPPPSQSSSSPSQSQSQIEIPLQSIEPTTTTTTTAATSSSSSSTTTTNVNSKTIINSSGGSIKSNNSNPLSQSSIIQRGPVIIRENNIEREEKKFDSMLQEEFDKVNTFFKQQEDEFIHQFNDIKQKVVAMSEICKNSSSKSLKDAISEDSPRLGKFSHLFYNPSIIKKRNSSNLTSSAIKDDGVGGASSNSQRYAQSSPSSSSSSSPSAMAVKAIAHAANAETYWNPGSLKLGKIRRSLKRAMEENYREIQALKEYTSLNMIAFRKIFKKYDKVLQSDSSVDGMKLVQQQYFVKSKKLVVIEREIESLYTNTFKHGNRRNAMAKLRVPKEYNAPPKVVFLTGGLSGMSLILFIFCIRYMINNVAIIYFDSPTPLHFLSMFMLHRMIGIPILLLWYFGILLYVTSGKNINLFLILGWDARTNITHYHILFLASGLTFLWTLSLFLYTYLAIHIDGKLPILFPFLLIAIVLFIVFCPFNIIFRPSRYWLIHTFARIFSAPFLPVKFKDFFFGDQFTSLSIVLSDLEYVICFFVSDLWTDGDICWRINPYIKPCLVCVPPLLRALQSLRRFKDTKQNIHMMNFGKYSLTMLSTVTSSIANSKLLTDSSHKKGTLALWIIISIVSTIYSLGWDFLMDWGVLRTHSRNFLLRDHLFYRHKWVYYFAMITNTLMRGSWTINVSFEALSSRTKELIVLATAVIEVTRRFQWNFFRLENEHLSNVGKFRAFDLKIPDILNTQSQQQQQQQQQQQQQQQQQQQQQQQQQEEIGANELLGNNGEPIVGDSKTVITSDDFINGTSKQEGTIDLDRAQFQYSKNDLEDKIEESIINNKNNNNNECTPFSENSFYNNDHSGDENSNE</sequence>
<dbReference type="EMBL" id="AAFI02000082">
    <property type="protein sequence ID" value="EAL64513.1"/>
    <property type="molecule type" value="Genomic_DNA"/>
</dbReference>
<dbReference type="RefSeq" id="XP_637991.1">
    <property type="nucleotide sequence ID" value="XM_632899.1"/>
</dbReference>
<dbReference type="SMR" id="Q54MJ9"/>
<dbReference type="FunCoup" id="Q54MJ9">
    <property type="interactions" value="96"/>
</dbReference>
<dbReference type="STRING" id="44689.Q54MJ9"/>
<dbReference type="PaxDb" id="44689-DDB0233081"/>
<dbReference type="EnsemblProtists" id="EAL64513">
    <property type="protein sequence ID" value="EAL64513"/>
    <property type="gene ID" value="DDB_G0285957"/>
</dbReference>
<dbReference type="GeneID" id="8625342"/>
<dbReference type="KEGG" id="ddi:DDB_G0285957"/>
<dbReference type="dictyBase" id="DDB_G0285957">
    <property type="gene designation" value="xpr1"/>
</dbReference>
<dbReference type="VEuPathDB" id="AmoebaDB:DDB_G0285957"/>
<dbReference type="eggNOG" id="KOG1162">
    <property type="taxonomic scope" value="Eukaryota"/>
</dbReference>
<dbReference type="HOGENOM" id="CLU_006116_1_1_1"/>
<dbReference type="InParanoid" id="Q54MJ9"/>
<dbReference type="OMA" id="GDMYCSL"/>
<dbReference type="PhylomeDB" id="Q54MJ9"/>
<dbReference type="PRO" id="PR:Q54MJ9"/>
<dbReference type="Proteomes" id="UP000002195">
    <property type="component" value="Chromosome 4"/>
</dbReference>
<dbReference type="GO" id="GO:0005886">
    <property type="term" value="C:plasma membrane"/>
    <property type="evidence" value="ECO:0000318"/>
    <property type="project" value="GO_Central"/>
</dbReference>
<dbReference type="GO" id="GO:0000822">
    <property type="term" value="F:inositol hexakisphosphate binding"/>
    <property type="evidence" value="ECO:0000250"/>
    <property type="project" value="UniProtKB"/>
</dbReference>
<dbReference type="GO" id="GO:0005315">
    <property type="term" value="F:phosphate transmembrane transporter activity"/>
    <property type="evidence" value="ECO:0000318"/>
    <property type="project" value="GO_Central"/>
</dbReference>
<dbReference type="GO" id="GO:0016036">
    <property type="term" value="P:cellular response to phosphate starvation"/>
    <property type="evidence" value="ECO:0000318"/>
    <property type="project" value="GO_Central"/>
</dbReference>
<dbReference type="GO" id="GO:0030643">
    <property type="term" value="P:intracellular phosphate ion homeostasis"/>
    <property type="evidence" value="ECO:0000250"/>
    <property type="project" value="UniProtKB"/>
</dbReference>
<dbReference type="GO" id="GO:0006817">
    <property type="term" value="P:phosphate ion transport"/>
    <property type="evidence" value="ECO:0000318"/>
    <property type="project" value="GO_Central"/>
</dbReference>
<dbReference type="CDD" id="cd14447">
    <property type="entry name" value="SPX"/>
    <property type="match status" value="1"/>
</dbReference>
<dbReference type="InterPro" id="IPR004342">
    <property type="entry name" value="EXS_C"/>
</dbReference>
<dbReference type="InterPro" id="IPR004331">
    <property type="entry name" value="SPX_dom"/>
</dbReference>
<dbReference type="PANTHER" id="PTHR10783:SF103">
    <property type="entry name" value="SOLUTE CARRIER FAMILY 53 MEMBER 1"/>
    <property type="match status" value="1"/>
</dbReference>
<dbReference type="PANTHER" id="PTHR10783">
    <property type="entry name" value="XENOTROPIC AND POLYTROPIC RETROVIRUS RECEPTOR 1-RELATED"/>
    <property type="match status" value="1"/>
</dbReference>
<dbReference type="Pfam" id="PF03124">
    <property type="entry name" value="EXS"/>
    <property type="match status" value="1"/>
</dbReference>
<dbReference type="Pfam" id="PF03105">
    <property type="entry name" value="SPX"/>
    <property type="match status" value="1"/>
</dbReference>
<dbReference type="SUPFAM" id="SSF81995">
    <property type="entry name" value="beta-sandwich domain of Sec23/24"/>
    <property type="match status" value="1"/>
</dbReference>
<dbReference type="PROSITE" id="PS51380">
    <property type="entry name" value="EXS"/>
    <property type="match status" value="1"/>
</dbReference>
<dbReference type="PROSITE" id="PS51382">
    <property type="entry name" value="SPX"/>
    <property type="match status" value="1"/>
</dbReference>
<reference key="1">
    <citation type="journal article" date="2005" name="Nature">
        <title>The genome of the social amoeba Dictyostelium discoideum.</title>
        <authorList>
            <person name="Eichinger L."/>
            <person name="Pachebat J.A."/>
            <person name="Gloeckner G."/>
            <person name="Rajandream M.A."/>
            <person name="Sucgang R."/>
            <person name="Berriman M."/>
            <person name="Song J."/>
            <person name="Olsen R."/>
            <person name="Szafranski K."/>
            <person name="Xu Q."/>
            <person name="Tunggal B."/>
            <person name="Kummerfeld S."/>
            <person name="Madera M."/>
            <person name="Konfortov B.A."/>
            <person name="Rivero F."/>
            <person name="Bankier A.T."/>
            <person name="Lehmann R."/>
            <person name="Hamlin N."/>
            <person name="Davies R."/>
            <person name="Gaudet P."/>
            <person name="Fey P."/>
            <person name="Pilcher K."/>
            <person name="Chen G."/>
            <person name="Saunders D."/>
            <person name="Sodergren E.J."/>
            <person name="Davis P."/>
            <person name="Kerhornou A."/>
            <person name="Nie X."/>
            <person name="Hall N."/>
            <person name="Anjard C."/>
            <person name="Hemphill L."/>
            <person name="Bason N."/>
            <person name="Farbrother P."/>
            <person name="Desany B."/>
            <person name="Just E."/>
            <person name="Morio T."/>
            <person name="Rost R."/>
            <person name="Churcher C.M."/>
            <person name="Cooper J."/>
            <person name="Haydock S."/>
            <person name="van Driessche N."/>
            <person name="Cronin A."/>
            <person name="Goodhead I."/>
            <person name="Muzny D.M."/>
            <person name="Mourier T."/>
            <person name="Pain A."/>
            <person name="Lu M."/>
            <person name="Harper D."/>
            <person name="Lindsay R."/>
            <person name="Hauser H."/>
            <person name="James K.D."/>
            <person name="Quiles M."/>
            <person name="Madan Babu M."/>
            <person name="Saito T."/>
            <person name="Buchrieser C."/>
            <person name="Wardroper A."/>
            <person name="Felder M."/>
            <person name="Thangavelu M."/>
            <person name="Johnson D."/>
            <person name="Knights A."/>
            <person name="Loulseged H."/>
            <person name="Mungall K.L."/>
            <person name="Oliver K."/>
            <person name="Price C."/>
            <person name="Quail M.A."/>
            <person name="Urushihara H."/>
            <person name="Hernandez J."/>
            <person name="Rabbinowitsch E."/>
            <person name="Steffen D."/>
            <person name="Sanders M."/>
            <person name="Ma J."/>
            <person name="Kohara Y."/>
            <person name="Sharp S."/>
            <person name="Simmonds M.N."/>
            <person name="Spiegler S."/>
            <person name="Tivey A."/>
            <person name="Sugano S."/>
            <person name="White B."/>
            <person name="Walker D."/>
            <person name="Woodward J.R."/>
            <person name="Winckler T."/>
            <person name="Tanaka Y."/>
            <person name="Shaulsky G."/>
            <person name="Schleicher M."/>
            <person name="Weinstock G.M."/>
            <person name="Rosenthal A."/>
            <person name="Cox E.C."/>
            <person name="Chisholm R.L."/>
            <person name="Gibbs R.A."/>
            <person name="Loomis W.F."/>
            <person name="Platzer M."/>
            <person name="Kay R.R."/>
            <person name="Williams J.G."/>
            <person name="Dear P.H."/>
            <person name="Noegel A.A."/>
            <person name="Barrell B.G."/>
            <person name="Kuspa A."/>
        </authorList>
    </citation>
    <scope>NUCLEOTIDE SEQUENCE [LARGE SCALE GENOMIC DNA]</scope>
    <source>
        <strain>AX4</strain>
    </source>
</reference>
<protein>
    <recommendedName>
        <fullName>SPX and EXS domain-containing protein 3</fullName>
    </recommendedName>
    <alternativeName>
        <fullName>Protein XPR1 homolog</fullName>
    </alternativeName>
</protein>
<name>SPXS3_DICDI</name>
<comment type="function">
    <text evidence="2 3">May play a role in phosphate homeostasis. Binds inositol hexakisphosphate (Ins6P) and similar inositol polyphosphates, such as 5-diphospho-inositol pentakisphosphate (5-InsP7); these are important intracellular signaling molecules.</text>
</comment>
<comment type="subcellular location">
    <subcellularLocation>
        <location evidence="8">Membrane</location>
        <topology evidence="8">Multi-pass membrane protein</topology>
    </subcellularLocation>
</comment>
<comment type="domain">
    <text evidence="2">The SPX domain has high affinity for inositol polyphosphates, such as myo-inositol hexakisphosphate and 5-diphospho-myo-inositol pentakisphosphate (5-InsP7). Its affinity for inorganic phosphate is tow to three orders of magnitude lower.</text>
</comment>
<comment type="similarity">
    <text evidence="8">Belongs to the SYG1 (TC 2.A.94) family.</text>
</comment>